<dbReference type="EMBL" id="CP001108">
    <property type="protein sequence ID" value="ACF45515.1"/>
    <property type="molecule type" value="Genomic_DNA"/>
</dbReference>
<dbReference type="RefSeq" id="WP_012505052.1">
    <property type="nucleotide sequence ID" value="NC_011059.1"/>
</dbReference>
<dbReference type="SMR" id="B4S517"/>
<dbReference type="STRING" id="290512.Paes_0459"/>
<dbReference type="KEGG" id="paa:Paes_0459"/>
<dbReference type="eggNOG" id="COG0781">
    <property type="taxonomic scope" value="Bacteria"/>
</dbReference>
<dbReference type="HOGENOM" id="CLU_087843_3_0_10"/>
<dbReference type="Proteomes" id="UP000002725">
    <property type="component" value="Chromosome"/>
</dbReference>
<dbReference type="GO" id="GO:0005829">
    <property type="term" value="C:cytosol"/>
    <property type="evidence" value="ECO:0007669"/>
    <property type="project" value="TreeGrafter"/>
</dbReference>
<dbReference type="GO" id="GO:0003723">
    <property type="term" value="F:RNA binding"/>
    <property type="evidence" value="ECO:0007669"/>
    <property type="project" value="UniProtKB-UniRule"/>
</dbReference>
<dbReference type="GO" id="GO:0006353">
    <property type="term" value="P:DNA-templated transcription termination"/>
    <property type="evidence" value="ECO:0007669"/>
    <property type="project" value="UniProtKB-UniRule"/>
</dbReference>
<dbReference type="GO" id="GO:0031564">
    <property type="term" value="P:transcription antitermination"/>
    <property type="evidence" value="ECO:0007669"/>
    <property type="project" value="UniProtKB-KW"/>
</dbReference>
<dbReference type="CDD" id="cd00619">
    <property type="entry name" value="Terminator_NusB"/>
    <property type="match status" value="1"/>
</dbReference>
<dbReference type="Gene3D" id="1.10.940.10">
    <property type="entry name" value="NusB-like"/>
    <property type="match status" value="1"/>
</dbReference>
<dbReference type="HAMAP" id="MF_00073">
    <property type="entry name" value="NusB"/>
    <property type="match status" value="1"/>
</dbReference>
<dbReference type="InterPro" id="IPR035926">
    <property type="entry name" value="NusB-like_sf"/>
</dbReference>
<dbReference type="InterPro" id="IPR011605">
    <property type="entry name" value="NusB_fam"/>
</dbReference>
<dbReference type="InterPro" id="IPR006027">
    <property type="entry name" value="NusB_RsmB_TIM44"/>
</dbReference>
<dbReference type="NCBIfam" id="TIGR01951">
    <property type="entry name" value="nusB"/>
    <property type="match status" value="1"/>
</dbReference>
<dbReference type="PANTHER" id="PTHR11078:SF3">
    <property type="entry name" value="ANTITERMINATION NUSB DOMAIN-CONTAINING PROTEIN"/>
    <property type="match status" value="1"/>
</dbReference>
<dbReference type="PANTHER" id="PTHR11078">
    <property type="entry name" value="N UTILIZATION SUBSTANCE PROTEIN B-RELATED"/>
    <property type="match status" value="1"/>
</dbReference>
<dbReference type="Pfam" id="PF01029">
    <property type="entry name" value="NusB"/>
    <property type="match status" value="1"/>
</dbReference>
<dbReference type="SUPFAM" id="SSF48013">
    <property type="entry name" value="NusB-like"/>
    <property type="match status" value="1"/>
</dbReference>
<sequence>MKAHRRHIREKIVQALYTLDVRDTDTATAGDWLITPEISKDPKAIRFFKQLLGAIVDNREEIDQYISKHTFNWDMSRIAIIDKNILRMAMAEILYFEDIPPKVSINEAIEIAKKFNSTDKSSKFVNGILDAVYNDLNKSGKINKCGRGLIDQSSNLKKNKEKSPSDDQ</sequence>
<reference key="1">
    <citation type="submission" date="2008-06" db="EMBL/GenBank/DDBJ databases">
        <title>Complete sequence of chromosome of Prosthecochloris aestuarii DSM 271.</title>
        <authorList>
            <consortium name="US DOE Joint Genome Institute"/>
            <person name="Lucas S."/>
            <person name="Copeland A."/>
            <person name="Lapidus A."/>
            <person name="Glavina del Rio T."/>
            <person name="Dalin E."/>
            <person name="Tice H."/>
            <person name="Bruce D."/>
            <person name="Goodwin L."/>
            <person name="Pitluck S."/>
            <person name="Schmutz J."/>
            <person name="Larimer F."/>
            <person name="Land M."/>
            <person name="Hauser L."/>
            <person name="Kyrpides N."/>
            <person name="Anderson I."/>
            <person name="Liu Z."/>
            <person name="Li T."/>
            <person name="Zhao F."/>
            <person name="Overmann J."/>
            <person name="Bryant D.A."/>
            <person name="Richardson P."/>
        </authorList>
    </citation>
    <scope>NUCLEOTIDE SEQUENCE [LARGE SCALE GENOMIC DNA]</scope>
    <source>
        <strain>DSM 271 / SK 413</strain>
    </source>
</reference>
<protein>
    <recommendedName>
        <fullName evidence="1">Transcription antitermination protein NusB</fullName>
    </recommendedName>
    <alternativeName>
        <fullName evidence="1">Antitermination factor NusB</fullName>
    </alternativeName>
</protein>
<proteinExistence type="inferred from homology"/>
<feature type="chain" id="PRO_1000092571" description="Transcription antitermination protein NusB">
    <location>
        <begin position="1"/>
        <end position="168"/>
    </location>
</feature>
<name>NUSB_PROA2</name>
<organism>
    <name type="scientific">Prosthecochloris aestuarii (strain DSM 271 / SK 413)</name>
    <dbReference type="NCBI Taxonomy" id="290512"/>
    <lineage>
        <taxon>Bacteria</taxon>
        <taxon>Pseudomonadati</taxon>
        <taxon>Chlorobiota</taxon>
        <taxon>Chlorobiia</taxon>
        <taxon>Chlorobiales</taxon>
        <taxon>Chlorobiaceae</taxon>
        <taxon>Prosthecochloris</taxon>
    </lineage>
</organism>
<comment type="function">
    <text evidence="1">Involved in transcription antitermination. Required for transcription of ribosomal RNA (rRNA) genes. Binds specifically to the boxA antiterminator sequence of the ribosomal RNA (rrn) operons.</text>
</comment>
<comment type="similarity">
    <text evidence="1">Belongs to the NusB family.</text>
</comment>
<gene>
    <name evidence="1" type="primary">nusB</name>
    <name type="ordered locus">Paes_0459</name>
</gene>
<evidence type="ECO:0000255" key="1">
    <source>
        <dbReference type="HAMAP-Rule" id="MF_00073"/>
    </source>
</evidence>
<keyword id="KW-0694">RNA-binding</keyword>
<keyword id="KW-0804">Transcription</keyword>
<keyword id="KW-0889">Transcription antitermination</keyword>
<keyword id="KW-0805">Transcription regulation</keyword>
<accession>B4S517</accession>